<feature type="chain" id="PRO_0000327456" description="26S proteasome non-ATPase regulatory subunit 4">
    <location>
        <begin position="1"/>
        <end position="349"/>
    </location>
</feature>
<feature type="domain" description="VWFA" evidence="3">
    <location>
        <begin position="5"/>
        <end position="188"/>
    </location>
</feature>
<feature type="domain" description="UIM 1" evidence="2">
    <location>
        <begin position="204"/>
        <end position="223"/>
    </location>
</feature>
<feature type="domain" description="UIM 2" evidence="2">
    <location>
        <begin position="259"/>
        <end position="278"/>
    </location>
</feature>
<feature type="region of interest" description="Disordered" evidence="4">
    <location>
        <begin position="219"/>
        <end position="257"/>
    </location>
</feature>
<feature type="region of interest" description="Disordered" evidence="4">
    <location>
        <begin position="274"/>
        <end position="349"/>
    </location>
</feature>
<feature type="compositionally biased region" description="Basic and acidic residues" evidence="4">
    <location>
        <begin position="219"/>
        <end position="234"/>
    </location>
</feature>
<feature type="compositionally biased region" description="Low complexity" evidence="4">
    <location>
        <begin position="235"/>
        <end position="253"/>
    </location>
</feature>
<feature type="compositionally biased region" description="Low complexity" evidence="4">
    <location>
        <begin position="280"/>
        <end position="301"/>
    </location>
</feature>
<feature type="compositionally biased region" description="Basic and acidic residues" evidence="4">
    <location>
        <begin position="335"/>
        <end position="349"/>
    </location>
</feature>
<sequence>MTLEATIVCLDNSEWMRNGDFTPSRSEAQKDAVNLICASKTQSNPESAVSIMSMAGKKPEVLVTLTQELSKILSGAQELKINGKIDFSTTMQIAQLALRHRQNNHQHPRIIAFVGSPLKETKEELIQLAKRLKKNGVAVDIINFGEVTENSDKLEAFINDVNNNDESHLLTVPPGPHILSDIILQSPIVESGSGQFGSEFINADTDPDLAMALKLSLEEEKQRQERERKAREEANGGSTNSGTTTTTAPTESNMDVNFEDDPELAEALALSMATDKMEVQSSTTNTDSQPPQQQQQPPTDDTSSEAFKDQDFLNSTLNSLPGVDPNRIKNALENLSKKDEDKDKDNEKK</sequence>
<evidence type="ECO:0000250" key="1"/>
<evidence type="ECO:0000255" key="2">
    <source>
        <dbReference type="PROSITE-ProRule" id="PRU00213"/>
    </source>
</evidence>
<evidence type="ECO:0000255" key="3">
    <source>
        <dbReference type="PROSITE-ProRule" id="PRU00219"/>
    </source>
</evidence>
<evidence type="ECO:0000256" key="4">
    <source>
        <dbReference type="SAM" id="MobiDB-lite"/>
    </source>
</evidence>
<evidence type="ECO:0000305" key="5"/>
<proteinExistence type="evidence at transcript level"/>
<comment type="function">
    <text evidence="1">Binds and presumably selects ubiquitin-conjugates for destruction.</text>
</comment>
<comment type="subunit">
    <text evidence="1">The 26S proteasome is composed of a core protease, known as the 20S proteasome, capped at one or both ends by the 19S regulatory complex (RC). The RC is composed of at least 18 different subunits in two subcomplexes, the base and the lid, which form the portions proximal and distal to the 20S proteolytic core, respectively (By similarity).</text>
</comment>
<comment type="similarity">
    <text evidence="5">Belongs to the proteasome subunit S5A family.</text>
</comment>
<name>PSMD4_DICDI</name>
<gene>
    <name type="primary">psmD4</name>
    <name type="ORF">DDB_G0275775</name>
</gene>
<dbReference type="EMBL" id="AAFI02000013">
    <property type="protein sequence ID" value="EAL69638.1"/>
    <property type="molecule type" value="Genomic_DNA"/>
</dbReference>
<dbReference type="RefSeq" id="XP_643477.1">
    <property type="nucleotide sequence ID" value="XM_638385.1"/>
</dbReference>
<dbReference type="SMR" id="Q553E0"/>
<dbReference type="FunCoup" id="Q553E0">
    <property type="interactions" value="718"/>
</dbReference>
<dbReference type="STRING" id="44689.Q553E0"/>
<dbReference type="PaxDb" id="44689-DDB0232981"/>
<dbReference type="EnsemblProtists" id="EAL69638">
    <property type="protein sequence ID" value="EAL69638"/>
    <property type="gene ID" value="DDB_G0275775"/>
</dbReference>
<dbReference type="GeneID" id="8620058"/>
<dbReference type="KEGG" id="ddi:DDB_G0275775"/>
<dbReference type="dictyBase" id="DDB_G0275775">
    <property type="gene designation" value="psmD4"/>
</dbReference>
<dbReference type="VEuPathDB" id="AmoebaDB:DDB_G0275775"/>
<dbReference type="eggNOG" id="KOG2884">
    <property type="taxonomic scope" value="Eukaryota"/>
</dbReference>
<dbReference type="HOGENOM" id="CLU_033293_1_0_1"/>
<dbReference type="InParanoid" id="Q553E0"/>
<dbReference type="OMA" id="QMSMQDQ"/>
<dbReference type="PhylomeDB" id="Q553E0"/>
<dbReference type="Reactome" id="R-DDI-9907900">
    <property type="pathway name" value="Proteasome assembly"/>
</dbReference>
<dbReference type="PRO" id="PR:Q553E0"/>
<dbReference type="Proteomes" id="UP000002195">
    <property type="component" value="Chromosome 2"/>
</dbReference>
<dbReference type="GO" id="GO:0005829">
    <property type="term" value="C:cytosol"/>
    <property type="evidence" value="ECO:0000318"/>
    <property type="project" value="GO_Central"/>
</dbReference>
<dbReference type="GO" id="GO:0005634">
    <property type="term" value="C:nucleus"/>
    <property type="evidence" value="ECO:0000318"/>
    <property type="project" value="GO_Central"/>
</dbReference>
<dbReference type="GO" id="GO:0000502">
    <property type="term" value="C:proteasome complex"/>
    <property type="evidence" value="ECO:0000250"/>
    <property type="project" value="dictyBase"/>
</dbReference>
<dbReference type="GO" id="GO:0008540">
    <property type="term" value="C:proteasome regulatory particle, base subcomplex"/>
    <property type="evidence" value="ECO:0000318"/>
    <property type="project" value="GO_Central"/>
</dbReference>
<dbReference type="GO" id="GO:0031593">
    <property type="term" value="F:polyubiquitin modification-dependent protein binding"/>
    <property type="evidence" value="ECO:0000250"/>
    <property type="project" value="dictyBase"/>
</dbReference>
<dbReference type="GO" id="GO:0043161">
    <property type="term" value="P:proteasome-mediated ubiquitin-dependent protein catabolic process"/>
    <property type="evidence" value="ECO:0000318"/>
    <property type="project" value="GO_Central"/>
</dbReference>
<dbReference type="GO" id="GO:0006511">
    <property type="term" value="P:ubiquitin-dependent protein catabolic process"/>
    <property type="evidence" value="ECO:0000250"/>
    <property type="project" value="dictyBase"/>
</dbReference>
<dbReference type="CDD" id="cd01452">
    <property type="entry name" value="VWA_26S_proteasome_subunit"/>
    <property type="match status" value="1"/>
</dbReference>
<dbReference type="FunFam" id="3.40.50.410:FF:000005">
    <property type="entry name" value="26S proteasome non-ATPase regulatory subunit 4"/>
    <property type="match status" value="1"/>
</dbReference>
<dbReference type="FunFam" id="1.10.287.3990:FF:000001">
    <property type="entry name" value="26S proteasome regulatory subunit S5A"/>
    <property type="match status" value="1"/>
</dbReference>
<dbReference type="Gene3D" id="1.10.287.3990">
    <property type="match status" value="1"/>
</dbReference>
<dbReference type="Gene3D" id="3.40.50.410">
    <property type="entry name" value="von Willebrand factor, type A domain"/>
    <property type="match status" value="1"/>
</dbReference>
<dbReference type="InterPro" id="IPR027040">
    <property type="entry name" value="PSMD4"/>
</dbReference>
<dbReference type="InterPro" id="IPR003903">
    <property type="entry name" value="UIM_dom"/>
</dbReference>
<dbReference type="InterPro" id="IPR002035">
    <property type="entry name" value="VWF_A"/>
</dbReference>
<dbReference type="InterPro" id="IPR036465">
    <property type="entry name" value="vWFA_dom_sf"/>
</dbReference>
<dbReference type="PANTHER" id="PTHR10223">
    <property type="entry name" value="26S PROTEASOME NON-ATPASE REGULATORY SUBUNIT 4"/>
    <property type="match status" value="1"/>
</dbReference>
<dbReference type="PANTHER" id="PTHR10223:SF0">
    <property type="entry name" value="26S PROTEASOME NON-ATPASE REGULATORY SUBUNIT 4"/>
    <property type="match status" value="1"/>
</dbReference>
<dbReference type="Pfam" id="PF13519">
    <property type="entry name" value="VWA_2"/>
    <property type="match status" value="1"/>
</dbReference>
<dbReference type="SMART" id="SM00726">
    <property type="entry name" value="UIM"/>
    <property type="match status" value="2"/>
</dbReference>
<dbReference type="SMART" id="SM00327">
    <property type="entry name" value="VWA"/>
    <property type="match status" value="1"/>
</dbReference>
<dbReference type="SUPFAM" id="SSF53300">
    <property type="entry name" value="vWA-like"/>
    <property type="match status" value="1"/>
</dbReference>
<dbReference type="PROSITE" id="PS50330">
    <property type="entry name" value="UIM"/>
    <property type="match status" value="2"/>
</dbReference>
<dbReference type="PROSITE" id="PS50234">
    <property type="entry name" value="VWFA"/>
    <property type="match status" value="1"/>
</dbReference>
<accession>Q553E0</accession>
<accession>Q86HC8</accession>
<organism>
    <name type="scientific">Dictyostelium discoideum</name>
    <name type="common">Social amoeba</name>
    <dbReference type="NCBI Taxonomy" id="44689"/>
    <lineage>
        <taxon>Eukaryota</taxon>
        <taxon>Amoebozoa</taxon>
        <taxon>Evosea</taxon>
        <taxon>Eumycetozoa</taxon>
        <taxon>Dictyostelia</taxon>
        <taxon>Dictyosteliales</taxon>
        <taxon>Dictyosteliaceae</taxon>
        <taxon>Dictyostelium</taxon>
    </lineage>
</organism>
<protein>
    <recommendedName>
        <fullName>26S proteasome non-ATPase regulatory subunit 4</fullName>
    </recommendedName>
    <alternativeName>
        <fullName>26S proteasome regulatory subunit RPN10</fullName>
    </alternativeName>
    <alternativeName>
        <fullName>26S proteasome regulatory subunit S5A</fullName>
    </alternativeName>
</protein>
<keyword id="KW-0647">Proteasome</keyword>
<keyword id="KW-1185">Reference proteome</keyword>
<keyword id="KW-0677">Repeat</keyword>
<reference key="1">
    <citation type="journal article" date="2002" name="Nature">
        <title>Sequence and analysis of chromosome 2 of Dictyostelium discoideum.</title>
        <authorList>
            <person name="Gloeckner G."/>
            <person name="Eichinger L."/>
            <person name="Szafranski K."/>
            <person name="Pachebat J.A."/>
            <person name="Bankier A.T."/>
            <person name="Dear P.H."/>
            <person name="Lehmann R."/>
            <person name="Baumgart C."/>
            <person name="Parra G."/>
            <person name="Abril J.F."/>
            <person name="Guigo R."/>
            <person name="Kumpf K."/>
            <person name="Tunggal B."/>
            <person name="Cox E.C."/>
            <person name="Quail M.A."/>
            <person name="Platzer M."/>
            <person name="Rosenthal A."/>
            <person name="Noegel A.A."/>
        </authorList>
    </citation>
    <scope>NUCLEOTIDE SEQUENCE [LARGE SCALE GENOMIC DNA]</scope>
    <source>
        <strain>AX4</strain>
    </source>
</reference>
<reference key="2">
    <citation type="journal article" date="2005" name="Nature">
        <title>The genome of the social amoeba Dictyostelium discoideum.</title>
        <authorList>
            <person name="Eichinger L."/>
            <person name="Pachebat J.A."/>
            <person name="Gloeckner G."/>
            <person name="Rajandream M.A."/>
            <person name="Sucgang R."/>
            <person name="Berriman M."/>
            <person name="Song J."/>
            <person name="Olsen R."/>
            <person name="Szafranski K."/>
            <person name="Xu Q."/>
            <person name="Tunggal B."/>
            <person name="Kummerfeld S."/>
            <person name="Madera M."/>
            <person name="Konfortov B.A."/>
            <person name="Rivero F."/>
            <person name="Bankier A.T."/>
            <person name="Lehmann R."/>
            <person name="Hamlin N."/>
            <person name="Davies R."/>
            <person name="Gaudet P."/>
            <person name="Fey P."/>
            <person name="Pilcher K."/>
            <person name="Chen G."/>
            <person name="Saunders D."/>
            <person name="Sodergren E.J."/>
            <person name="Davis P."/>
            <person name="Kerhornou A."/>
            <person name="Nie X."/>
            <person name="Hall N."/>
            <person name="Anjard C."/>
            <person name="Hemphill L."/>
            <person name="Bason N."/>
            <person name="Farbrother P."/>
            <person name="Desany B."/>
            <person name="Just E."/>
            <person name="Morio T."/>
            <person name="Rost R."/>
            <person name="Churcher C.M."/>
            <person name="Cooper J."/>
            <person name="Haydock S."/>
            <person name="van Driessche N."/>
            <person name="Cronin A."/>
            <person name="Goodhead I."/>
            <person name="Muzny D.M."/>
            <person name="Mourier T."/>
            <person name="Pain A."/>
            <person name="Lu M."/>
            <person name="Harper D."/>
            <person name="Lindsay R."/>
            <person name="Hauser H."/>
            <person name="James K.D."/>
            <person name="Quiles M."/>
            <person name="Madan Babu M."/>
            <person name="Saito T."/>
            <person name="Buchrieser C."/>
            <person name="Wardroper A."/>
            <person name="Felder M."/>
            <person name="Thangavelu M."/>
            <person name="Johnson D."/>
            <person name="Knights A."/>
            <person name="Loulseged H."/>
            <person name="Mungall K.L."/>
            <person name="Oliver K."/>
            <person name="Price C."/>
            <person name="Quail M.A."/>
            <person name="Urushihara H."/>
            <person name="Hernandez J."/>
            <person name="Rabbinowitsch E."/>
            <person name="Steffen D."/>
            <person name="Sanders M."/>
            <person name="Ma J."/>
            <person name="Kohara Y."/>
            <person name="Sharp S."/>
            <person name="Simmonds M.N."/>
            <person name="Spiegler S."/>
            <person name="Tivey A."/>
            <person name="Sugano S."/>
            <person name="White B."/>
            <person name="Walker D."/>
            <person name="Woodward J.R."/>
            <person name="Winckler T."/>
            <person name="Tanaka Y."/>
            <person name="Shaulsky G."/>
            <person name="Schleicher M."/>
            <person name="Weinstock G.M."/>
            <person name="Rosenthal A."/>
            <person name="Cox E.C."/>
            <person name="Chisholm R.L."/>
            <person name="Gibbs R.A."/>
            <person name="Loomis W.F."/>
            <person name="Platzer M."/>
            <person name="Kay R.R."/>
            <person name="Williams J.G."/>
            <person name="Dear P.H."/>
            <person name="Noegel A.A."/>
            <person name="Barrell B.G."/>
            <person name="Kuspa A."/>
        </authorList>
    </citation>
    <scope>NUCLEOTIDE SEQUENCE [LARGE SCALE GENOMIC DNA]</scope>
    <source>
        <strain>AX4</strain>
    </source>
</reference>